<dbReference type="EC" id="2.1.1.74" evidence="1"/>
<dbReference type="EMBL" id="CP000918">
    <property type="protein sequence ID" value="ACO16239.1"/>
    <property type="molecule type" value="Genomic_DNA"/>
</dbReference>
<dbReference type="RefSeq" id="WP_000083729.1">
    <property type="nucleotide sequence ID" value="NC_012468.1"/>
</dbReference>
<dbReference type="SMR" id="C1C6S2"/>
<dbReference type="KEGG" id="snm:SP70585_0982"/>
<dbReference type="HOGENOM" id="CLU_033057_1_0_9"/>
<dbReference type="Proteomes" id="UP000002211">
    <property type="component" value="Chromosome"/>
</dbReference>
<dbReference type="GO" id="GO:0005829">
    <property type="term" value="C:cytosol"/>
    <property type="evidence" value="ECO:0007669"/>
    <property type="project" value="TreeGrafter"/>
</dbReference>
<dbReference type="GO" id="GO:0050660">
    <property type="term" value="F:flavin adenine dinucleotide binding"/>
    <property type="evidence" value="ECO:0007669"/>
    <property type="project" value="UniProtKB-UniRule"/>
</dbReference>
<dbReference type="GO" id="GO:0047151">
    <property type="term" value="F:tRNA (uracil(54)-C5)-methyltransferase activity, 5,10-methylenetetrahydrofolate-dependent"/>
    <property type="evidence" value="ECO:0007669"/>
    <property type="project" value="UniProtKB-UniRule"/>
</dbReference>
<dbReference type="GO" id="GO:0030488">
    <property type="term" value="P:tRNA methylation"/>
    <property type="evidence" value="ECO:0007669"/>
    <property type="project" value="TreeGrafter"/>
</dbReference>
<dbReference type="GO" id="GO:0002098">
    <property type="term" value="P:tRNA wobble uridine modification"/>
    <property type="evidence" value="ECO:0007669"/>
    <property type="project" value="TreeGrafter"/>
</dbReference>
<dbReference type="FunFam" id="3.50.50.60:FF:000035">
    <property type="entry name" value="Methylenetetrahydrofolate--tRNA-(uracil-5-)-methyltransferase TrmFO"/>
    <property type="match status" value="1"/>
</dbReference>
<dbReference type="FunFam" id="3.50.50.60:FF:000040">
    <property type="entry name" value="Methylenetetrahydrofolate--tRNA-(uracil-5-)-methyltransferase TrmFO"/>
    <property type="match status" value="1"/>
</dbReference>
<dbReference type="Gene3D" id="3.50.50.60">
    <property type="entry name" value="FAD/NAD(P)-binding domain"/>
    <property type="match status" value="2"/>
</dbReference>
<dbReference type="HAMAP" id="MF_01037">
    <property type="entry name" value="TrmFO"/>
    <property type="match status" value="1"/>
</dbReference>
<dbReference type="InterPro" id="IPR036188">
    <property type="entry name" value="FAD/NAD-bd_sf"/>
</dbReference>
<dbReference type="InterPro" id="IPR002218">
    <property type="entry name" value="MnmG-rel"/>
</dbReference>
<dbReference type="InterPro" id="IPR020595">
    <property type="entry name" value="MnmG-rel_CS"/>
</dbReference>
<dbReference type="InterPro" id="IPR040131">
    <property type="entry name" value="MnmG_N"/>
</dbReference>
<dbReference type="InterPro" id="IPR004417">
    <property type="entry name" value="TrmFO"/>
</dbReference>
<dbReference type="NCBIfam" id="TIGR00137">
    <property type="entry name" value="gid_trmFO"/>
    <property type="match status" value="1"/>
</dbReference>
<dbReference type="NCBIfam" id="NF003739">
    <property type="entry name" value="PRK05335.1"/>
    <property type="match status" value="1"/>
</dbReference>
<dbReference type="PANTHER" id="PTHR11806">
    <property type="entry name" value="GLUCOSE INHIBITED DIVISION PROTEIN A"/>
    <property type="match status" value="1"/>
</dbReference>
<dbReference type="PANTHER" id="PTHR11806:SF2">
    <property type="entry name" value="METHYLENETETRAHYDROFOLATE--TRNA-(URACIL-5-)-METHYLTRANSFERASE TRMFO"/>
    <property type="match status" value="1"/>
</dbReference>
<dbReference type="Pfam" id="PF01134">
    <property type="entry name" value="GIDA"/>
    <property type="match status" value="1"/>
</dbReference>
<dbReference type="SUPFAM" id="SSF51905">
    <property type="entry name" value="FAD/NAD(P)-binding domain"/>
    <property type="match status" value="1"/>
</dbReference>
<dbReference type="PROSITE" id="PS01281">
    <property type="entry name" value="GIDA_2"/>
    <property type="match status" value="1"/>
</dbReference>
<proteinExistence type="inferred from homology"/>
<organism>
    <name type="scientific">Streptococcus pneumoniae (strain 70585)</name>
    <dbReference type="NCBI Taxonomy" id="488221"/>
    <lineage>
        <taxon>Bacteria</taxon>
        <taxon>Bacillati</taxon>
        <taxon>Bacillota</taxon>
        <taxon>Bacilli</taxon>
        <taxon>Lactobacillales</taxon>
        <taxon>Streptococcaceae</taxon>
        <taxon>Streptococcus</taxon>
    </lineage>
</organism>
<sequence>MSQSYINVIGAGLAGSEAAYQIAERGIPVKLYEMRGVKSTPQHKTDNFAELVCSNSLRGDALTNAVGLLKEEMRRLGSVILESAEATRVPAGGALAVDRDGFSQMVTEKVVNHPLIEVVRDEITELPTDVITVVATGPLTSDALAEKIHALNNGDGFYFYDAAAPIIDVNTIDMSKVYLKSRYDKGEAAYLNAPMTKQEFMDFHEALVNAEEAPLNSFEKEKYFEGCMPIEVMAKRGIKTMLYGPMKPVGLEYPDDYTGPRDGEFKTPYAVVQLRQDNAAGSLYNIVGFQTHLKWGEQKRVFQMIPGLENAEFVRYGVMHRNSYMDSPNLLEQTYRSKKQPNLFFAGQMTGVEGYVESAASGLVAGINAARLFKEESEAIFPETTAIGSLAHYITHADSKHFQPMNVNFGIIKELEGERIRDKKARYEKIAERALADLEEFLTV</sequence>
<reference key="1">
    <citation type="journal article" date="2010" name="Genome Biol.">
        <title>Structure and dynamics of the pan-genome of Streptococcus pneumoniae and closely related species.</title>
        <authorList>
            <person name="Donati C."/>
            <person name="Hiller N.L."/>
            <person name="Tettelin H."/>
            <person name="Muzzi A."/>
            <person name="Croucher N.J."/>
            <person name="Angiuoli S.V."/>
            <person name="Oggioni M."/>
            <person name="Dunning Hotopp J.C."/>
            <person name="Hu F.Z."/>
            <person name="Riley D.R."/>
            <person name="Covacci A."/>
            <person name="Mitchell T.J."/>
            <person name="Bentley S.D."/>
            <person name="Kilian M."/>
            <person name="Ehrlich G.D."/>
            <person name="Rappuoli R."/>
            <person name="Moxon E.R."/>
            <person name="Masignani V."/>
        </authorList>
    </citation>
    <scope>NUCLEOTIDE SEQUENCE [LARGE SCALE GENOMIC DNA]</scope>
    <source>
        <strain>70585</strain>
    </source>
</reference>
<evidence type="ECO:0000255" key="1">
    <source>
        <dbReference type="HAMAP-Rule" id="MF_01037"/>
    </source>
</evidence>
<accession>C1C6S2</accession>
<keyword id="KW-0963">Cytoplasm</keyword>
<keyword id="KW-0274">FAD</keyword>
<keyword id="KW-0285">Flavoprotein</keyword>
<keyword id="KW-0489">Methyltransferase</keyword>
<keyword id="KW-0520">NAD</keyword>
<keyword id="KW-0521">NADP</keyword>
<keyword id="KW-0808">Transferase</keyword>
<keyword id="KW-0819">tRNA processing</keyword>
<protein>
    <recommendedName>
        <fullName evidence="1">Methylenetetrahydrofolate--tRNA-(uracil-5-)-methyltransferase TrmFO</fullName>
        <ecNumber evidence="1">2.1.1.74</ecNumber>
    </recommendedName>
    <alternativeName>
        <fullName evidence="1">Folate-dependent tRNA (uracil-5-)-methyltransferase</fullName>
    </alternativeName>
    <alternativeName>
        <fullName evidence="1">Folate-dependent tRNA(M-5-U54)-methyltransferase</fullName>
    </alternativeName>
</protein>
<feature type="chain" id="PRO_1000149477" description="Methylenetetrahydrofolate--tRNA-(uracil-5-)-methyltransferase TrmFO">
    <location>
        <begin position="1"/>
        <end position="444"/>
    </location>
</feature>
<feature type="binding site" evidence="1">
    <location>
        <begin position="10"/>
        <end position="15"/>
    </location>
    <ligand>
        <name>FAD</name>
        <dbReference type="ChEBI" id="CHEBI:57692"/>
    </ligand>
</feature>
<name>TRMFO_STRP7</name>
<gene>
    <name evidence="1" type="primary">trmFO</name>
    <name type="ordered locus">SP70585_0982</name>
</gene>
<comment type="function">
    <text evidence="1">Catalyzes the folate-dependent formation of 5-methyl-uridine at position 54 (M-5-U54) in all tRNAs.</text>
</comment>
<comment type="catalytic activity">
    <reaction evidence="1">
        <text>uridine(54) in tRNA + (6R)-5,10-methylene-5,6,7,8-tetrahydrofolate + NADH + H(+) = 5-methyluridine(54) in tRNA + (6S)-5,6,7,8-tetrahydrofolate + NAD(+)</text>
        <dbReference type="Rhea" id="RHEA:16873"/>
        <dbReference type="Rhea" id="RHEA-COMP:10167"/>
        <dbReference type="Rhea" id="RHEA-COMP:10193"/>
        <dbReference type="ChEBI" id="CHEBI:15378"/>
        <dbReference type="ChEBI" id="CHEBI:15636"/>
        <dbReference type="ChEBI" id="CHEBI:57453"/>
        <dbReference type="ChEBI" id="CHEBI:57540"/>
        <dbReference type="ChEBI" id="CHEBI:57945"/>
        <dbReference type="ChEBI" id="CHEBI:65315"/>
        <dbReference type="ChEBI" id="CHEBI:74447"/>
        <dbReference type="EC" id="2.1.1.74"/>
    </reaction>
</comment>
<comment type="catalytic activity">
    <reaction evidence="1">
        <text>uridine(54) in tRNA + (6R)-5,10-methylene-5,6,7,8-tetrahydrofolate + NADPH + H(+) = 5-methyluridine(54) in tRNA + (6S)-5,6,7,8-tetrahydrofolate + NADP(+)</text>
        <dbReference type="Rhea" id="RHEA:62372"/>
        <dbReference type="Rhea" id="RHEA-COMP:10167"/>
        <dbReference type="Rhea" id="RHEA-COMP:10193"/>
        <dbReference type="ChEBI" id="CHEBI:15378"/>
        <dbReference type="ChEBI" id="CHEBI:15636"/>
        <dbReference type="ChEBI" id="CHEBI:57453"/>
        <dbReference type="ChEBI" id="CHEBI:57783"/>
        <dbReference type="ChEBI" id="CHEBI:58349"/>
        <dbReference type="ChEBI" id="CHEBI:65315"/>
        <dbReference type="ChEBI" id="CHEBI:74447"/>
        <dbReference type="EC" id="2.1.1.74"/>
    </reaction>
</comment>
<comment type="cofactor">
    <cofactor evidence="1">
        <name>FAD</name>
        <dbReference type="ChEBI" id="CHEBI:57692"/>
    </cofactor>
</comment>
<comment type="subcellular location">
    <subcellularLocation>
        <location evidence="1">Cytoplasm</location>
    </subcellularLocation>
</comment>
<comment type="similarity">
    <text evidence="1">Belongs to the MnmG family. TrmFO subfamily.</text>
</comment>